<sequence length="102" mass="10362">MAAAGGGGAGAAGGGKVSFKIILTSDPKLPFKVFSVPEAAPFTAVLKFAAEEFKVPPQTSAIITNDGVGINPQQSAGNVFLKHGSELRLIPRDRVGALAAPF</sequence>
<reference key="1">
    <citation type="journal article" date="2002" name="Nature">
        <title>The genome sequence and structure of rice chromosome 1.</title>
        <authorList>
            <person name="Sasaki T."/>
            <person name="Matsumoto T."/>
            <person name="Yamamoto K."/>
            <person name="Sakata K."/>
            <person name="Baba T."/>
            <person name="Katayose Y."/>
            <person name="Wu J."/>
            <person name="Niimura Y."/>
            <person name="Cheng Z."/>
            <person name="Nagamura Y."/>
            <person name="Antonio B.A."/>
            <person name="Kanamori H."/>
            <person name="Hosokawa S."/>
            <person name="Masukawa M."/>
            <person name="Arikawa K."/>
            <person name="Chiden Y."/>
            <person name="Hayashi M."/>
            <person name="Okamoto M."/>
            <person name="Ando T."/>
            <person name="Aoki H."/>
            <person name="Arita K."/>
            <person name="Hamada M."/>
            <person name="Harada C."/>
            <person name="Hijishita S."/>
            <person name="Honda M."/>
            <person name="Ichikawa Y."/>
            <person name="Idonuma A."/>
            <person name="Iijima M."/>
            <person name="Ikeda M."/>
            <person name="Ikeno M."/>
            <person name="Ito S."/>
            <person name="Ito T."/>
            <person name="Ito Y."/>
            <person name="Ito Y."/>
            <person name="Iwabuchi A."/>
            <person name="Kamiya K."/>
            <person name="Karasawa W."/>
            <person name="Katagiri S."/>
            <person name="Kikuta A."/>
            <person name="Kobayashi N."/>
            <person name="Kono I."/>
            <person name="Machita K."/>
            <person name="Maehara T."/>
            <person name="Mizuno H."/>
            <person name="Mizubayashi T."/>
            <person name="Mukai Y."/>
            <person name="Nagasaki H."/>
            <person name="Nakashima M."/>
            <person name="Nakama Y."/>
            <person name="Nakamichi Y."/>
            <person name="Nakamura M."/>
            <person name="Namiki N."/>
            <person name="Negishi M."/>
            <person name="Ohta I."/>
            <person name="Ono N."/>
            <person name="Saji S."/>
            <person name="Sakai K."/>
            <person name="Shibata M."/>
            <person name="Shimokawa T."/>
            <person name="Shomura A."/>
            <person name="Song J."/>
            <person name="Takazaki Y."/>
            <person name="Terasawa K."/>
            <person name="Tsuji K."/>
            <person name="Waki K."/>
            <person name="Yamagata H."/>
            <person name="Yamane H."/>
            <person name="Yoshiki S."/>
            <person name="Yoshihara R."/>
            <person name="Yukawa K."/>
            <person name="Zhong H."/>
            <person name="Iwama H."/>
            <person name="Endo T."/>
            <person name="Ito H."/>
            <person name="Hahn J.H."/>
            <person name="Kim H.-I."/>
            <person name="Eun M.-Y."/>
            <person name="Yano M."/>
            <person name="Jiang J."/>
            <person name="Gojobori T."/>
        </authorList>
    </citation>
    <scope>NUCLEOTIDE SEQUENCE [LARGE SCALE GENOMIC DNA]</scope>
    <source>
        <strain>cv. Nipponbare</strain>
    </source>
</reference>
<reference key="2">
    <citation type="journal article" date="2005" name="Nature">
        <title>The map-based sequence of the rice genome.</title>
        <authorList>
            <consortium name="International rice genome sequencing project (IRGSP)"/>
        </authorList>
    </citation>
    <scope>NUCLEOTIDE SEQUENCE [LARGE SCALE GENOMIC DNA]</scope>
    <source>
        <strain>cv. Nipponbare</strain>
    </source>
</reference>
<reference key="3">
    <citation type="journal article" date="2008" name="Nucleic Acids Res.">
        <title>The rice annotation project database (RAP-DB): 2008 update.</title>
        <authorList>
            <consortium name="The rice annotation project (RAP)"/>
        </authorList>
    </citation>
    <scope>GENOME REANNOTATION</scope>
    <source>
        <strain>cv. Nipponbare</strain>
    </source>
</reference>
<reference key="4">
    <citation type="journal article" date="2013" name="Rice">
        <title>Improvement of the Oryza sativa Nipponbare reference genome using next generation sequence and optical map data.</title>
        <authorList>
            <person name="Kawahara Y."/>
            <person name="de la Bastide M."/>
            <person name="Hamilton J.P."/>
            <person name="Kanamori H."/>
            <person name="McCombie W.R."/>
            <person name="Ouyang S."/>
            <person name="Schwartz D.C."/>
            <person name="Tanaka T."/>
            <person name="Wu J."/>
            <person name="Zhou S."/>
            <person name="Childs K.L."/>
            <person name="Davidson R.M."/>
            <person name="Lin H."/>
            <person name="Quesada-Ocampo L."/>
            <person name="Vaillancourt B."/>
            <person name="Sakai H."/>
            <person name="Lee S.S."/>
            <person name="Kim J."/>
            <person name="Numa H."/>
            <person name="Itoh T."/>
            <person name="Buell C.R."/>
            <person name="Matsumoto T."/>
        </authorList>
    </citation>
    <scope>GENOME REANNOTATION</scope>
    <source>
        <strain>cv. Nipponbare</strain>
    </source>
</reference>
<reference key="5">
    <citation type="journal article" date="2003" name="Science">
        <title>Collection, mapping, and annotation of over 28,000 cDNA clones from japonica rice.</title>
        <authorList>
            <consortium name="The rice full-length cDNA consortium"/>
        </authorList>
    </citation>
    <scope>NUCLEOTIDE SEQUENCE [LARGE SCALE MRNA]</scope>
    <source>
        <strain>cv. Nipponbare</strain>
    </source>
</reference>
<keyword id="KW-1017">Isopeptide bond</keyword>
<keyword id="KW-1185">Reference proteome</keyword>
<keyword id="KW-0833">Ubl conjugation pathway</keyword>
<dbReference type="EMBL" id="AP003263">
    <property type="protein sequence ID" value="BAB63621.1"/>
    <property type="molecule type" value="Genomic_DNA"/>
</dbReference>
<dbReference type="EMBL" id="AP008207">
    <property type="protein sequence ID" value="BAF07392.1"/>
    <property type="molecule type" value="Genomic_DNA"/>
</dbReference>
<dbReference type="EMBL" id="AP014957">
    <property type="protein sequence ID" value="BAS76347.1"/>
    <property type="molecule type" value="Genomic_DNA"/>
</dbReference>
<dbReference type="EMBL" id="AK059165">
    <property type="protein sequence ID" value="BAG86907.1"/>
    <property type="molecule type" value="mRNA"/>
</dbReference>
<dbReference type="RefSeq" id="XP_015622173.1">
    <property type="nucleotide sequence ID" value="XM_015766687.1"/>
</dbReference>
<dbReference type="SMR" id="Q94DM8"/>
<dbReference type="FunCoup" id="Q94DM8">
    <property type="interactions" value="1912"/>
</dbReference>
<dbReference type="STRING" id="39947.Q94DM8"/>
<dbReference type="PaxDb" id="39947-Q94DM8"/>
<dbReference type="EnsemblPlants" id="Os01t0962400-01">
    <property type="protein sequence ID" value="Os01t0962400-01"/>
    <property type="gene ID" value="Os01g0962400"/>
</dbReference>
<dbReference type="Gramene" id="Os01t0962400-01">
    <property type="protein sequence ID" value="Os01t0962400-01"/>
    <property type="gene ID" value="Os01g0962400"/>
</dbReference>
<dbReference type="KEGG" id="dosa:Os01g0962400"/>
<dbReference type="eggNOG" id="KOG3483">
    <property type="taxonomic scope" value="Eukaryota"/>
</dbReference>
<dbReference type="HOGENOM" id="CLU_175114_0_0_1"/>
<dbReference type="InParanoid" id="Q94DM8"/>
<dbReference type="OMA" id="MEHAVGK"/>
<dbReference type="OrthoDB" id="284357at2759"/>
<dbReference type="Proteomes" id="UP000000763">
    <property type="component" value="Chromosome 1"/>
</dbReference>
<dbReference type="Proteomes" id="UP000059680">
    <property type="component" value="Chromosome 1"/>
</dbReference>
<dbReference type="GO" id="GO:0005737">
    <property type="term" value="C:cytoplasm"/>
    <property type="evidence" value="ECO:0000318"/>
    <property type="project" value="GO_Central"/>
</dbReference>
<dbReference type="GO" id="GO:0005634">
    <property type="term" value="C:nucleus"/>
    <property type="evidence" value="ECO:0000318"/>
    <property type="project" value="GO_Central"/>
</dbReference>
<dbReference type="GO" id="GO:0071569">
    <property type="term" value="P:protein ufmylation"/>
    <property type="evidence" value="ECO:0007669"/>
    <property type="project" value="InterPro"/>
</dbReference>
<dbReference type="GO" id="GO:0034976">
    <property type="term" value="P:response to endoplasmic reticulum stress"/>
    <property type="evidence" value="ECO:0000318"/>
    <property type="project" value="GO_Central"/>
</dbReference>
<dbReference type="GO" id="GO:0061709">
    <property type="term" value="P:reticulophagy"/>
    <property type="evidence" value="ECO:0000318"/>
    <property type="project" value="GO_Central"/>
</dbReference>
<dbReference type="CDD" id="cd01766">
    <property type="entry name" value="Ubl_UFM1"/>
    <property type="match status" value="1"/>
</dbReference>
<dbReference type="FunFam" id="3.10.20.90:FF:000044">
    <property type="entry name" value="Ubiquitin-fold modifier 1"/>
    <property type="match status" value="1"/>
</dbReference>
<dbReference type="Gene3D" id="3.10.20.90">
    <property type="entry name" value="Phosphatidylinositol 3-kinase Catalytic Subunit, Chain A, domain 1"/>
    <property type="match status" value="1"/>
</dbReference>
<dbReference type="InterPro" id="IPR029071">
    <property type="entry name" value="Ubiquitin-like_domsf"/>
</dbReference>
<dbReference type="InterPro" id="IPR005375">
    <property type="entry name" value="UFM1"/>
</dbReference>
<dbReference type="PANTHER" id="PTHR15825">
    <property type="entry name" value="UBIQUITIN-FOLD MODIFIER 1"/>
    <property type="match status" value="1"/>
</dbReference>
<dbReference type="PANTHER" id="PTHR15825:SF8">
    <property type="entry name" value="UBIQUITIN-FOLD MODIFIER 1"/>
    <property type="match status" value="1"/>
</dbReference>
<dbReference type="Pfam" id="PF03671">
    <property type="entry name" value="Ufm1"/>
    <property type="match status" value="1"/>
</dbReference>
<dbReference type="PIRSF" id="PIRSF038027">
    <property type="entry name" value="Ubiquitin-like_Ufm1"/>
    <property type="match status" value="1"/>
</dbReference>
<dbReference type="SUPFAM" id="SSF54236">
    <property type="entry name" value="Ubiquitin-like"/>
    <property type="match status" value="1"/>
</dbReference>
<comment type="function">
    <text evidence="1">Ubiquitin-like modifier protein which binds to a number of as yet unidentified target proteins.</text>
</comment>
<comment type="similarity">
    <text evidence="3">Belongs to the UFM1 family.</text>
</comment>
<evidence type="ECO:0000250" key="1"/>
<evidence type="ECO:0000255" key="2"/>
<evidence type="ECO:0000305" key="3"/>
<gene>
    <name type="ordered locus">Os01g0962400</name>
    <name type="ordered locus">LOC_Os01g73140</name>
    <name type="ORF">P0483G10.25</name>
</gene>
<accession>Q94DM8</accession>
<accession>Q0JFT6</accession>
<organism>
    <name type="scientific">Oryza sativa subsp. japonica</name>
    <name type="common">Rice</name>
    <dbReference type="NCBI Taxonomy" id="39947"/>
    <lineage>
        <taxon>Eukaryota</taxon>
        <taxon>Viridiplantae</taxon>
        <taxon>Streptophyta</taxon>
        <taxon>Embryophyta</taxon>
        <taxon>Tracheophyta</taxon>
        <taxon>Spermatophyta</taxon>
        <taxon>Magnoliopsida</taxon>
        <taxon>Liliopsida</taxon>
        <taxon>Poales</taxon>
        <taxon>Poaceae</taxon>
        <taxon>BOP clade</taxon>
        <taxon>Oryzoideae</taxon>
        <taxon>Oryzeae</taxon>
        <taxon>Oryzinae</taxon>
        <taxon>Oryza</taxon>
        <taxon>Oryza sativa</taxon>
    </lineage>
</organism>
<proteinExistence type="inferred from homology"/>
<protein>
    <recommendedName>
        <fullName>Ubiquitin-fold modifier 1</fullName>
    </recommendedName>
</protein>
<name>UFM1_ORYSJ</name>
<feature type="chain" id="PRO_0000042148" description="Ubiquitin-fold modifier 1">
    <location>
        <begin position="1"/>
        <end position="96"/>
    </location>
</feature>
<feature type="propeptide" id="PRO_0000042149" description="Removed in mature form" evidence="1">
    <location>
        <begin position="97"/>
        <end position="102"/>
    </location>
</feature>
<feature type="cross-link" description="Glycyl lysine isopeptide (Gly-Lys) (interchain with K-? in acceptor proteins)" evidence="2">
    <location>
        <position position="96"/>
    </location>
</feature>